<gene>
    <name evidence="1" type="primary">tig</name>
    <name type="ordered locus">BP1774</name>
</gene>
<dbReference type="EC" id="5.2.1.8" evidence="1"/>
<dbReference type="EMBL" id="BX640416">
    <property type="protein sequence ID" value="CAE42061.1"/>
    <property type="molecule type" value="Genomic_DNA"/>
</dbReference>
<dbReference type="RefSeq" id="NP_880485.1">
    <property type="nucleotide sequence ID" value="NC_002929.2"/>
</dbReference>
<dbReference type="RefSeq" id="WP_010930555.1">
    <property type="nucleotide sequence ID" value="NZ_CP039022.1"/>
</dbReference>
<dbReference type="SMR" id="Q7VXI8"/>
<dbReference type="STRING" id="257313.BP1774"/>
<dbReference type="PaxDb" id="257313-BP1774"/>
<dbReference type="GeneID" id="69602048"/>
<dbReference type="KEGG" id="bpe:BP1774"/>
<dbReference type="PATRIC" id="fig|257313.5.peg.1904"/>
<dbReference type="eggNOG" id="COG0544">
    <property type="taxonomic scope" value="Bacteria"/>
</dbReference>
<dbReference type="HOGENOM" id="CLU_033058_2_0_4"/>
<dbReference type="Proteomes" id="UP000002676">
    <property type="component" value="Chromosome"/>
</dbReference>
<dbReference type="GO" id="GO:0005737">
    <property type="term" value="C:cytoplasm"/>
    <property type="evidence" value="ECO:0007669"/>
    <property type="project" value="UniProtKB-SubCell"/>
</dbReference>
<dbReference type="GO" id="GO:0003755">
    <property type="term" value="F:peptidyl-prolyl cis-trans isomerase activity"/>
    <property type="evidence" value="ECO:0007669"/>
    <property type="project" value="UniProtKB-UniRule"/>
</dbReference>
<dbReference type="GO" id="GO:0044183">
    <property type="term" value="F:protein folding chaperone"/>
    <property type="evidence" value="ECO:0007669"/>
    <property type="project" value="TreeGrafter"/>
</dbReference>
<dbReference type="GO" id="GO:0043022">
    <property type="term" value="F:ribosome binding"/>
    <property type="evidence" value="ECO:0007669"/>
    <property type="project" value="TreeGrafter"/>
</dbReference>
<dbReference type="GO" id="GO:0051083">
    <property type="term" value="P:'de novo' cotranslational protein folding"/>
    <property type="evidence" value="ECO:0007669"/>
    <property type="project" value="TreeGrafter"/>
</dbReference>
<dbReference type="GO" id="GO:0051301">
    <property type="term" value="P:cell division"/>
    <property type="evidence" value="ECO:0007669"/>
    <property type="project" value="UniProtKB-KW"/>
</dbReference>
<dbReference type="GO" id="GO:0061077">
    <property type="term" value="P:chaperone-mediated protein folding"/>
    <property type="evidence" value="ECO:0007669"/>
    <property type="project" value="TreeGrafter"/>
</dbReference>
<dbReference type="GO" id="GO:0015031">
    <property type="term" value="P:protein transport"/>
    <property type="evidence" value="ECO:0007669"/>
    <property type="project" value="UniProtKB-UniRule"/>
</dbReference>
<dbReference type="GO" id="GO:0043335">
    <property type="term" value="P:protein unfolding"/>
    <property type="evidence" value="ECO:0007669"/>
    <property type="project" value="TreeGrafter"/>
</dbReference>
<dbReference type="FunFam" id="3.10.50.40:FF:000001">
    <property type="entry name" value="Trigger factor"/>
    <property type="match status" value="1"/>
</dbReference>
<dbReference type="Gene3D" id="3.10.50.40">
    <property type="match status" value="1"/>
</dbReference>
<dbReference type="Gene3D" id="3.30.70.1050">
    <property type="entry name" value="Trigger factor ribosome-binding domain"/>
    <property type="match status" value="1"/>
</dbReference>
<dbReference type="Gene3D" id="1.10.3120.10">
    <property type="entry name" value="Trigger factor, C-terminal domain"/>
    <property type="match status" value="1"/>
</dbReference>
<dbReference type="HAMAP" id="MF_00303">
    <property type="entry name" value="Trigger_factor_Tig"/>
    <property type="match status" value="1"/>
</dbReference>
<dbReference type="InterPro" id="IPR046357">
    <property type="entry name" value="PPIase_dom_sf"/>
</dbReference>
<dbReference type="InterPro" id="IPR001179">
    <property type="entry name" value="PPIase_FKBP_dom"/>
</dbReference>
<dbReference type="InterPro" id="IPR005215">
    <property type="entry name" value="Trig_fac"/>
</dbReference>
<dbReference type="InterPro" id="IPR008880">
    <property type="entry name" value="Trigger_fac_C"/>
</dbReference>
<dbReference type="InterPro" id="IPR037041">
    <property type="entry name" value="Trigger_fac_C_sf"/>
</dbReference>
<dbReference type="InterPro" id="IPR008881">
    <property type="entry name" value="Trigger_fac_ribosome-bd_bac"/>
</dbReference>
<dbReference type="InterPro" id="IPR036611">
    <property type="entry name" value="Trigger_fac_ribosome-bd_sf"/>
</dbReference>
<dbReference type="InterPro" id="IPR027304">
    <property type="entry name" value="Trigger_fact/SurA_dom_sf"/>
</dbReference>
<dbReference type="NCBIfam" id="TIGR00115">
    <property type="entry name" value="tig"/>
    <property type="match status" value="1"/>
</dbReference>
<dbReference type="PANTHER" id="PTHR30560">
    <property type="entry name" value="TRIGGER FACTOR CHAPERONE AND PEPTIDYL-PROLYL CIS/TRANS ISOMERASE"/>
    <property type="match status" value="1"/>
</dbReference>
<dbReference type="PANTHER" id="PTHR30560:SF3">
    <property type="entry name" value="TRIGGER FACTOR-LIKE PROTEIN TIG, CHLOROPLASTIC"/>
    <property type="match status" value="1"/>
</dbReference>
<dbReference type="Pfam" id="PF00254">
    <property type="entry name" value="FKBP_C"/>
    <property type="match status" value="1"/>
</dbReference>
<dbReference type="Pfam" id="PF05698">
    <property type="entry name" value="Trigger_C"/>
    <property type="match status" value="1"/>
</dbReference>
<dbReference type="Pfam" id="PF05697">
    <property type="entry name" value="Trigger_N"/>
    <property type="match status" value="1"/>
</dbReference>
<dbReference type="PIRSF" id="PIRSF003095">
    <property type="entry name" value="Trigger_factor"/>
    <property type="match status" value="1"/>
</dbReference>
<dbReference type="SUPFAM" id="SSF54534">
    <property type="entry name" value="FKBP-like"/>
    <property type="match status" value="1"/>
</dbReference>
<dbReference type="SUPFAM" id="SSF109998">
    <property type="entry name" value="Triger factor/SurA peptide-binding domain-like"/>
    <property type="match status" value="1"/>
</dbReference>
<dbReference type="SUPFAM" id="SSF102735">
    <property type="entry name" value="Trigger factor ribosome-binding domain"/>
    <property type="match status" value="1"/>
</dbReference>
<dbReference type="PROSITE" id="PS50059">
    <property type="entry name" value="FKBP_PPIASE"/>
    <property type="match status" value="1"/>
</dbReference>
<name>TIG_BORPE</name>
<comment type="function">
    <text evidence="1">Involved in protein export. Acts as a chaperone by maintaining the newly synthesized protein in an open conformation. Functions as a peptidyl-prolyl cis-trans isomerase.</text>
</comment>
<comment type="catalytic activity">
    <reaction evidence="1">
        <text>[protein]-peptidylproline (omega=180) = [protein]-peptidylproline (omega=0)</text>
        <dbReference type="Rhea" id="RHEA:16237"/>
        <dbReference type="Rhea" id="RHEA-COMP:10747"/>
        <dbReference type="Rhea" id="RHEA-COMP:10748"/>
        <dbReference type="ChEBI" id="CHEBI:83833"/>
        <dbReference type="ChEBI" id="CHEBI:83834"/>
        <dbReference type="EC" id="5.2.1.8"/>
    </reaction>
</comment>
<comment type="subcellular location">
    <subcellularLocation>
        <location>Cytoplasm</location>
    </subcellularLocation>
    <text evidence="1">About half TF is bound to the ribosome near the polypeptide exit tunnel while the other half is free in the cytoplasm.</text>
</comment>
<comment type="domain">
    <text evidence="1">Consists of 3 domains; the N-terminus binds the ribosome, the middle domain has PPIase activity, while the C-terminus has intrinsic chaperone activity on its own.</text>
</comment>
<comment type="similarity">
    <text evidence="1">Belongs to the FKBP-type PPIase family. Tig subfamily.</text>
</comment>
<reference key="1">
    <citation type="journal article" date="2003" name="Nat. Genet.">
        <title>Comparative analysis of the genome sequences of Bordetella pertussis, Bordetella parapertussis and Bordetella bronchiseptica.</title>
        <authorList>
            <person name="Parkhill J."/>
            <person name="Sebaihia M."/>
            <person name="Preston A."/>
            <person name="Murphy L.D."/>
            <person name="Thomson N.R."/>
            <person name="Harris D.E."/>
            <person name="Holden M.T.G."/>
            <person name="Churcher C.M."/>
            <person name="Bentley S.D."/>
            <person name="Mungall K.L."/>
            <person name="Cerdeno-Tarraga A.-M."/>
            <person name="Temple L."/>
            <person name="James K.D."/>
            <person name="Harris B."/>
            <person name="Quail M.A."/>
            <person name="Achtman M."/>
            <person name="Atkin R."/>
            <person name="Baker S."/>
            <person name="Basham D."/>
            <person name="Bason N."/>
            <person name="Cherevach I."/>
            <person name="Chillingworth T."/>
            <person name="Collins M."/>
            <person name="Cronin A."/>
            <person name="Davis P."/>
            <person name="Doggett J."/>
            <person name="Feltwell T."/>
            <person name="Goble A."/>
            <person name="Hamlin N."/>
            <person name="Hauser H."/>
            <person name="Holroyd S."/>
            <person name="Jagels K."/>
            <person name="Leather S."/>
            <person name="Moule S."/>
            <person name="Norberczak H."/>
            <person name="O'Neil S."/>
            <person name="Ormond D."/>
            <person name="Price C."/>
            <person name="Rabbinowitsch E."/>
            <person name="Rutter S."/>
            <person name="Sanders M."/>
            <person name="Saunders D."/>
            <person name="Seeger K."/>
            <person name="Sharp S."/>
            <person name="Simmonds M."/>
            <person name="Skelton J."/>
            <person name="Squares R."/>
            <person name="Squares S."/>
            <person name="Stevens K."/>
            <person name="Unwin L."/>
            <person name="Whitehead S."/>
            <person name="Barrell B.G."/>
            <person name="Maskell D.J."/>
        </authorList>
    </citation>
    <scope>NUCLEOTIDE SEQUENCE [LARGE SCALE GENOMIC DNA]</scope>
    <source>
        <strain>Tohama I / ATCC BAA-589 / NCTC 13251</strain>
    </source>
</reference>
<organism>
    <name type="scientific">Bordetella pertussis (strain Tohama I / ATCC BAA-589 / NCTC 13251)</name>
    <dbReference type="NCBI Taxonomy" id="257313"/>
    <lineage>
        <taxon>Bacteria</taxon>
        <taxon>Pseudomonadati</taxon>
        <taxon>Pseudomonadota</taxon>
        <taxon>Betaproteobacteria</taxon>
        <taxon>Burkholderiales</taxon>
        <taxon>Alcaligenaceae</taxon>
        <taxon>Bordetella</taxon>
    </lineage>
</organism>
<sequence length="436" mass="47616">MQPVVETLSGLERRVDLAVSVAEVEKEVQAQLKRVGRTAKVAGFRPGKAPLAMLERSHGPGIRYDVINSLVGRAFEQAVDGAKLRVAGSPTLTPKTEGVAEDTLAFTATFEVYPEVTVPDLSALAVTRYDTPVTDAEVNQTLDVLRKQRAKFEIREGRASQDGDRVVLDFAGTIDGVPFEGGKAEDFPFVLGQGRMLPEFEEAALGLKAGESKVFPLKFPDDYQGKEVAGKTAEFTITVKEVAEGVLPEVDAEFAKSLGQAEGDVEKLKADIRTNIEREVKARLQGRTKGSVMDALVEAGKFDVPKALVDSDVEGRIAAAREELKQRGVPNADSVPMPAEVFSTESERRVRLGLLVSELVKQAQLQAKPEQVRARIEEFAQNYEQPAQVVSYYLADRQRRAEIEAIVLEDNVVAHVLENAKVADEKVPFDQLMGMA</sequence>
<accession>Q7VXI8</accession>
<keyword id="KW-0131">Cell cycle</keyword>
<keyword id="KW-0132">Cell division</keyword>
<keyword id="KW-0143">Chaperone</keyword>
<keyword id="KW-0963">Cytoplasm</keyword>
<keyword id="KW-0413">Isomerase</keyword>
<keyword id="KW-1185">Reference proteome</keyword>
<keyword id="KW-0697">Rotamase</keyword>
<protein>
    <recommendedName>
        <fullName evidence="1">Trigger factor</fullName>
        <shortName evidence="1">TF</shortName>
        <ecNumber evidence="1">5.2.1.8</ecNumber>
    </recommendedName>
    <alternativeName>
        <fullName evidence="1">PPIase</fullName>
    </alternativeName>
</protein>
<proteinExistence type="inferred from homology"/>
<feature type="chain" id="PRO_0000179322" description="Trigger factor">
    <location>
        <begin position="1"/>
        <end position="436"/>
    </location>
</feature>
<feature type="domain" description="PPIase FKBP-type" evidence="1">
    <location>
        <begin position="163"/>
        <end position="248"/>
    </location>
</feature>
<evidence type="ECO:0000255" key="1">
    <source>
        <dbReference type="HAMAP-Rule" id="MF_00303"/>
    </source>
</evidence>